<dbReference type="EC" id="1.5.8.2" evidence="3"/>
<dbReference type="EMBL" id="X68079">
    <property type="protein sequence ID" value="CAA48212.1"/>
    <property type="molecule type" value="Genomic_DNA"/>
</dbReference>
<dbReference type="PIR" id="S24124">
    <property type="entry name" value="S24124"/>
</dbReference>
<dbReference type="PDB" id="1DJN">
    <property type="method" value="X-ray"/>
    <property type="resolution" value="2.20 A"/>
    <property type="chains" value="A/B=2-730"/>
</dbReference>
<dbReference type="PDB" id="1DJQ">
    <property type="method" value="X-ray"/>
    <property type="resolution" value="2.20 A"/>
    <property type="chains" value="A/B=2-730"/>
</dbReference>
<dbReference type="PDB" id="1O94">
    <property type="method" value="X-ray"/>
    <property type="resolution" value="2.00 A"/>
    <property type="chains" value="A/B=2-730"/>
</dbReference>
<dbReference type="PDB" id="1O95">
    <property type="method" value="X-ray"/>
    <property type="resolution" value="3.70 A"/>
    <property type="chains" value="A/B=2-730"/>
</dbReference>
<dbReference type="PDB" id="2TMD">
    <property type="method" value="X-ray"/>
    <property type="resolution" value="2.40 A"/>
    <property type="chains" value="A/B=2-730"/>
</dbReference>
<dbReference type="PDBsum" id="1DJN"/>
<dbReference type="PDBsum" id="1DJQ"/>
<dbReference type="PDBsum" id="1O94"/>
<dbReference type="PDBsum" id="1O95"/>
<dbReference type="PDBsum" id="2TMD"/>
<dbReference type="SMR" id="P16099"/>
<dbReference type="STRING" id="1122236.GCA_000378225_02075"/>
<dbReference type="DrugBank" id="DB03247">
    <property type="generic name" value="Flavin mononucleotide"/>
</dbReference>
<dbReference type="BioCyc" id="MetaCyc:MONOMER-13313"/>
<dbReference type="EvolutionaryTrace" id="P16099"/>
<dbReference type="GO" id="GO:0051539">
    <property type="term" value="F:4 iron, 4 sulfur cluster binding"/>
    <property type="evidence" value="ECO:0007669"/>
    <property type="project" value="UniProtKB-KW"/>
</dbReference>
<dbReference type="GO" id="GO:0010181">
    <property type="term" value="F:FMN binding"/>
    <property type="evidence" value="ECO:0007669"/>
    <property type="project" value="InterPro"/>
</dbReference>
<dbReference type="GO" id="GO:0046872">
    <property type="term" value="F:metal ion binding"/>
    <property type="evidence" value="ECO:0007669"/>
    <property type="project" value="UniProtKB-KW"/>
</dbReference>
<dbReference type="GO" id="GO:0050470">
    <property type="term" value="F:trimethylamine dehydrogenase activity"/>
    <property type="evidence" value="ECO:0007669"/>
    <property type="project" value="UniProtKB-EC"/>
</dbReference>
<dbReference type="GO" id="GO:0009056">
    <property type="term" value="P:catabolic process"/>
    <property type="evidence" value="ECO:0007669"/>
    <property type="project" value="UniProtKB-ARBA"/>
</dbReference>
<dbReference type="CDD" id="cd02929">
    <property type="entry name" value="TMADH_HD_FMN"/>
    <property type="match status" value="1"/>
</dbReference>
<dbReference type="Gene3D" id="3.20.20.70">
    <property type="entry name" value="Aldolase class I"/>
    <property type="match status" value="1"/>
</dbReference>
<dbReference type="Gene3D" id="3.50.50.60">
    <property type="entry name" value="FAD/NAD(P)-binding domain"/>
    <property type="match status" value="1"/>
</dbReference>
<dbReference type="Gene3D" id="3.40.50.720">
    <property type="entry name" value="NAD(P)-binding Rossmann-like Domain"/>
    <property type="match status" value="1"/>
</dbReference>
<dbReference type="InterPro" id="IPR013785">
    <property type="entry name" value="Aldolase_TIM"/>
</dbReference>
<dbReference type="InterPro" id="IPR036188">
    <property type="entry name" value="FAD/NAD-bd_sf"/>
</dbReference>
<dbReference type="InterPro" id="IPR051793">
    <property type="entry name" value="NADH:flavin_oxidoreductase"/>
</dbReference>
<dbReference type="InterPro" id="IPR001155">
    <property type="entry name" value="OxRdtase_FMN_N"/>
</dbReference>
<dbReference type="InterPro" id="IPR054428">
    <property type="entry name" value="TMADH/DMDH/HD_second_a-b"/>
</dbReference>
<dbReference type="InterPro" id="IPR037348">
    <property type="entry name" value="TMADH/DMDH_FMN-bd"/>
</dbReference>
<dbReference type="PANTHER" id="PTHR42917">
    <property type="entry name" value="2,4-DIENOYL-COA REDUCTASE"/>
    <property type="match status" value="1"/>
</dbReference>
<dbReference type="PANTHER" id="PTHR42917:SF2">
    <property type="entry name" value="2,4-DIENOYL-COA REDUCTASE [(2E)-ENOYL-COA-PRODUCING]"/>
    <property type="match status" value="1"/>
</dbReference>
<dbReference type="Pfam" id="PF13450">
    <property type="entry name" value="NAD_binding_8"/>
    <property type="match status" value="1"/>
</dbReference>
<dbReference type="Pfam" id="PF00724">
    <property type="entry name" value="Oxidored_FMN"/>
    <property type="match status" value="1"/>
</dbReference>
<dbReference type="Pfam" id="PF22620">
    <property type="entry name" value="OYE-like_second_a-b"/>
    <property type="match status" value="1"/>
</dbReference>
<dbReference type="PRINTS" id="PR00368">
    <property type="entry name" value="FADPNR"/>
</dbReference>
<dbReference type="SUPFAM" id="SSF51905">
    <property type="entry name" value="FAD/NAD(P)-binding domain"/>
    <property type="match status" value="1"/>
</dbReference>
<dbReference type="SUPFAM" id="SSF51395">
    <property type="entry name" value="FMN-linked oxidoreductases"/>
    <property type="match status" value="1"/>
</dbReference>
<dbReference type="SUPFAM" id="SSF51971">
    <property type="entry name" value="Nucleotide-binding domain"/>
    <property type="match status" value="1"/>
</dbReference>
<sequence>MARDPKHDILFEPIQIGPKTLRNRFYQVPHCIGAGSDKPGFQSAHRSVKAEGGWAALNTEYCSINPESDDTHRLSARIWDEGDVRNLKAMTDEVHKYGALAGVELWYGGAHAPNMESRATPRGPSQYASEFETLSYCKEMDLSDIAQVQQFYVDAAKRSRDAGFDIVYVYGAHSYLPLQFLNPYYNKRTDKYGGSLENRARFWLETLEKVKHAVGSDCAIATRFGVDTVYGPGQIEAEVDGQKFVEMADSLVDMWDITIGDIAEWGEDAGPSRFYQQGHTIPWVKLVKQVSKKPVLGVGRYTDPEKMIEIVTKGYADIIGCARPSIADPFLPQKVEQGRYDDIRVCIGCNVCISRWEIGGPPMICTQNATAGEEYRRGWHPEKFRQTKNKDSVLIVGAGPSGSEAARVLMESGYTVHLTDTAEKIGGHLNQVAALPGLGEWSYHRDYRETQITKLLKKNKESQLALGQKPMTADDVLQYGADKVIIATGARWNTDGTNCLTHDPIPGADASLPDQLTPEQVMDGKKKIGKRVVILNADTYFMAPSLAEKLATAGHEVTIVSGVHLANYMHFTLEYPNMMRRLHELHVEELGDHFCSRIEPGRMEIYNIWGDGSKRTYRGPGVSPRDANTSHRWIEFDSLVLVTGRHSECTLWNELKARESEWAENDIKGIYLIGDAEAPRLIADATFTGHRVAREIEEANPQIAIPYKRETIAWGTPHMPGGNFKIEYKV</sequence>
<comment type="catalytic activity">
    <reaction evidence="3">
        <text>trimethylamine + oxidized [electron-transfer flavoprotein] + H2O + H(+) = dimethylamine + reduced [electron-transfer flavoprotein] + formaldehyde</text>
        <dbReference type="Rhea" id="RHEA:11864"/>
        <dbReference type="Rhea" id="RHEA-COMP:10685"/>
        <dbReference type="Rhea" id="RHEA-COMP:10686"/>
        <dbReference type="ChEBI" id="CHEBI:15377"/>
        <dbReference type="ChEBI" id="CHEBI:15378"/>
        <dbReference type="ChEBI" id="CHEBI:16842"/>
        <dbReference type="ChEBI" id="CHEBI:57692"/>
        <dbReference type="ChEBI" id="CHEBI:58040"/>
        <dbReference type="ChEBI" id="CHEBI:58307"/>
        <dbReference type="ChEBI" id="CHEBI:58389"/>
        <dbReference type="EC" id="1.5.8.2"/>
    </reaction>
</comment>
<comment type="cofactor">
    <cofactor evidence="2 3 4">
        <name>FMN</name>
        <dbReference type="ChEBI" id="CHEBI:58210"/>
    </cofactor>
    <text evidence="2 3 4">Binds 1 FMN covalently per subunit.</text>
</comment>
<comment type="cofactor">
    <cofactor evidence="2 3">
        <name>[4Fe-4S] cluster</name>
        <dbReference type="ChEBI" id="CHEBI:49883"/>
    </cofactor>
    <text evidence="2 3">Binds 1 [4Fe-4S] cluster per subunit.</text>
</comment>
<comment type="subunit">
    <text evidence="2">Homodimer (PubMed:12567183). Forms a ternary complex with the heterodimeric electron transfer flavoprotein (PubMed:12567183).</text>
</comment>
<comment type="similarity">
    <text evidence="8">In the N-terminal section; belongs to the NADH:flavin oxidoreductase/NADH oxidase family.</text>
</comment>
<reference key="1">
    <citation type="journal article" date="1992" name="FEBS Lett.">
        <title>Trimethylamine dehydrogenase of bacterium W3A1. Molecular cloning, sequence determination and over-expression of the gene.</title>
        <authorList>
            <person name="Boyd G."/>
            <person name="Mathews F.S."/>
            <person name="Packman L.C."/>
            <person name="Scrutton N.S."/>
        </authorList>
    </citation>
    <scope>NUCLEOTIDE SEQUENCE [GENOMIC DNA]</scope>
    <source>
        <strain>W3A1</strain>
    </source>
</reference>
<reference key="2">
    <citation type="journal article" date="1978" name="FEBS Lett.">
        <title>Amino acid sequence of a cofactor peptide from trimethylamine dehydrogenase.</title>
        <authorList>
            <person name="Kenney W.C."/>
            <person name="McIntire W."/>
            <person name="Steenkamp D.J."/>
            <person name="Benisek W.F."/>
        </authorList>
    </citation>
    <scope>PROTEIN SEQUENCE OF 32-43</scope>
    <scope>FMN COFACTOR</scope>
    <source>
        <strain>W3A1</strain>
    </source>
</reference>
<reference evidence="14" key="3">
    <citation type="journal article" date="1992" name="J. Biol. Chem.">
        <title>Correlation of X-ray deduced and experimental amino acid sequences of trimethylamine dehydrogenase.</title>
        <authorList>
            <person name="Barber M.J."/>
            <person name="Neame P.J."/>
            <person name="Lim L.W."/>
            <person name="White S."/>
            <person name="Mathews F.S."/>
        </authorList>
    </citation>
    <scope>X-RAY CRYSTALLOGRAPHY (2.40 ANGSTROMS) OF 2-730 IN COMPLEX WITH ADP; FMN AND [4FE-4S] CLUSTER</scope>
    <scope>PARTIAL PROTEIN SEQUENCE</scope>
    <scope>CATALYTIC ACTIVITY</scope>
    <source>
        <strain>W3A1 / NCIB 11348</strain>
    </source>
</reference>
<reference evidence="12 13" key="4">
    <citation type="journal article" date="2003" name="Nat. Struct. Biol.">
        <title>Extensive conformational sampling in a ternary electron transfer complex.</title>
        <authorList>
            <person name="Leys D."/>
            <person name="Basran J."/>
            <person name="Talfournier F."/>
            <person name="Sutcliffe M.J."/>
            <person name="Scrutton N.S."/>
        </authorList>
    </citation>
    <scope>X-RAY CRYSTALLOGRAPHY (2.0 ANGSTROMS) OF 2-730 IN COMPLEX WITH ADP; FMN; [4FE-4S] CLUSTER AND ETFA-EFTB</scope>
</reference>
<name>DHTM_METME</name>
<protein>
    <recommendedName>
        <fullName evidence="7">Trimethylamine dehydrogenase</fullName>
        <shortName evidence="5 6">TMADH</shortName>
        <ecNumber evidence="3">1.5.8.2</ecNumber>
    </recommendedName>
</protein>
<accession>P16099</accession>
<gene>
    <name evidence="5" type="primary">tmd</name>
</gene>
<keyword id="KW-0002">3D-structure</keyword>
<keyword id="KW-0004">4Fe-4S</keyword>
<keyword id="KW-0903">Direct protein sequencing</keyword>
<keyword id="KW-0285">Flavoprotein</keyword>
<keyword id="KW-0288">FMN</keyword>
<keyword id="KW-0408">Iron</keyword>
<keyword id="KW-0411">Iron-sulfur</keyword>
<keyword id="KW-0479">Metal-binding</keyword>
<keyword id="KW-0560">Oxidoreductase</keyword>
<organism>
    <name type="scientific">Methylophilus methylotrophus</name>
    <name type="common">Bacterium W3A1</name>
    <dbReference type="NCBI Taxonomy" id="17"/>
    <lineage>
        <taxon>Bacteria</taxon>
        <taxon>Pseudomonadati</taxon>
        <taxon>Pseudomonadota</taxon>
        <taxon>Betaproteobacteria</taxon>
        <taxon>Nitrosomonadales</taxon>
        <taxon>Methylophilaceae</taxon>
        <taxon>Methylophilus</taxon>
    </lineage>
</organism>
<proteinExistence type="evidence at protein level"/>
<evidence type="ECO:0000250" key="1"/>
<evidence type="ECO:0000269" key="2">
    <source>
    </source>
</evidence>
<evidence type="ECO:0000269" key="3">
    <source>
    </source>
</evidence>
<evidence type="ECO:0000269" key="4">
    <source>
    </source>
</evidence>
<evidence type="ECO:0000303" key="5">
    <source>
    </source>
</evidence>
<evidence type="ECO:0000303" key="6">
    <source>
    </source>
</evidence>
<evidence type="ECO:0000303" key="7">
    <source>
    </source>
</evidence>
<evidence type="ECO:0000305" key="8"/>
<evidence type="ECO:0000305" key="9">
    <source>
    </source>
</evidence>
<evidence type="ECO:0007744" key="10">
    <source>
        <dbReference type="PDB" id="1DJN"/>
    </source>
</evidence>
<evidence type="ECO:0007744" key="11">
    <source>
        <dbReference type="PDB" id="1DJQ"/>
    </source>
</evidence>
<evidence type="ECO:0007744" key="12">
    <source>
        <dbReference type="PDB" id="1O94"/>
    </source>
</evidence>
<evidence type="ECO:0007744" key="13">
    <source>
        <dbReference type="PDB" id="1O95"/>
    </source>
</evidence>
<evidence type="ECO:0007744" key="14">
    <source>
        <dbReference type="PDB" id="2TMD"/>
    </source>
</evidence>
<evidence type="ECO:0007829" key="15">
    <source>
        <dbReference type="PDB" id="1DJN"/>
    </source>
</evidence>
<evidence type="ECO:0007829" key="16">
    <source>
        <dbReference type="PDB" id="1O94"/>
    </source>
</evidence>
<feature type="initiator methionine" description="Removed" evidence="3">
    <location>
        <position position="1"/>
    </location>
</feature>
<feature type="chain" id="PRO_0000194472" description="Trimethylamine dehydrogenase">
    <location>
        <begin position="2"/>
        <end position="730"/>
    </location>
</feature>
<feature type="active site" description="Proton donor" evidence="1">
    <location>
        <position position="175"/>
    </location>
</feature>
<feature type="binding site" evidence="10 11 12 13 14">
    <location>
        <position position="29"/>
    </location>
    <ligand>
        <name>FMN</name>
        <dbReference type="ChEBI" id="CHEBI:58210"/>
    </ligand>
</feature>
<feature type="binding site" description="covalent" evidence="3 9 12 13 14">
    <location>
        <position position="31"/>
    </location>
    <ligand>
        <name>FMN</name>
        <dbReference type="ChEBI" id="CHEBI:58210"/>
    </ligand>
</feature>
<feature type="binding site" evidence="10 11 12 13 14">
    <location>
        <position position="61"/>
    </location>
    <ligand>
        <name>FMN</name>
        <dbReference type="ChEBI" id="CHEBI:58210"/>
    </ligand>
</feature>
<feature type="binding site" evidence="10 11 12 13 14">
    <location>
        <position position="104"/>
    </location>
    <ligand>
        <name>FMN</name>
        <dbReference type="ChEBI" id="CHEBI:58210"/>
    </ligand>
</feature>
<feature type="binding site" evidence="1">
    <location>
        <begin position="170"/>
        <end position="173"/>
    </location>
    <ligand>
        <name>substrate</name>
    </ligand>
</feature>
<feature type="binding site" evidence="10 11 12 13 14">
    <location>
        <position position="223"/>
    </location>
    <ligand>
        <name>FMN</name>
        <dbReference type="ChEBI" id="CHEBI:58210"/>
    </ligand>
</feature>
<feature type="binding site" evidence="10 11 12 13 14">
    <location>
        <position position="268"/>
    </location>
    <ligand>
        <name>FMN</name>
        <dbReference type="ChEBI" id="CHEBI:58210"/>
    </ligand>
</feature>
<feature type="binding site" evidence="10 11 12 13 14">
    <location>
        <position position="300"/>
    </location>
    <ligand>
        <name>FMN</name>
        <dbReference type="ChEBI" id="CHEBI:58210"/>
    </ligand>
</feature>
<feature type="binding site" evidence="10 11 12 13 14">
    <location>
        <position position="322"/>
    </location>
    <ligand>
        <name>FMN</name>
        <dbReference type="ChEBI" id="CHEBI:58210"/>
    </ligand>
</feature>
<feature type="binding site" evidence="10 11 12 13 14">
    <location>
        <position position="323"/>
    </location>
    <ligand>
        <name>FMN</name>
        <dbReference type="ChEBI" id="CHEBI:58210"/>
    </ligand>
</feature>
<feature type="binding site" evidence="10 11 12 13 14">
    <location>
        <position position="346"/>
    </location>
    <ligand>
        <name>[4Fe-4S] cluster</name>
        <dbReference type="ChEBI" id="CHEBI:49883"/>
    </ligand>
</feature>
<feature type="binding site" evidence="10 11 12 13 14">
    <location>
        <position position="349"/>
    </location>
    <ligand>
        <name>[4Fe-4S] cluster</name>
        <dbReference type="ChEBI" id="CHEBI:49883"/>
    </ligand>
</feature>
<feature type="binding site" evidence="10 11 12 13 14">
    <location>
        <position position="352"/>
    </location>
    <ligand>
        <name>[4Fe-4S] cluster</name>
        <dbReference type="ChEBI" id="CHEBI:49883"/>
    </ligand>
</feature>
<feature type="binding site" evidence="10 11 12 13 14">
    <location>
        <position position="365"/>
    </location>
    <ligand>
        <name>[4Fe-4S] cluster</name>
        <dbReference type="ChEBI" id="CHEBI:49883"/>
    </ligand>
</feature>
<feature type="binding site" evidence="10 11 12 13 14">
    <location>
        <position position="401"/>
    </location>
    <ligand>
        <name>ADP</name>
        <dbReference type="ChEBI" id="CHEBI:456216"/>
    </ligand>
</feature>
<feature type="binding site" evidence="10 11 12 13 14">
    <location>
        <position position="420"/>
    </location>
    <ligand>
        <name>ADP</name>
        <dbReference type="ChEBI" id="CHEBI:456216"/>
    </ligand>
</feature>
<feature type="binding site" evidence="11 14">
    <location>
        <position position="421"/>
    </location>
    <ligand>
        <name>ADP</name>
        <dbReference type="ChEBI" id="CHEBI:456216"/>
    </ligand>
</feature>
<feature type="binding site" evidence="10 11 12 13 14">
    <location>
        <position position="428"/>
    </location>
    <ligand>
        <name>ADP</name>
        <dbReference type="ChEBI" id="CHEBI:456216"/>
    </ligand>
</feature>
<feature type="binding site" evidence="10 11 12 13 14">
    <location>
        <position position="471"/>
    </location>
    <ligand>
        <name>ADP</name>
        <dbReference type="ChEBI" id="CHEBI:456216"/>
    </ligand>
</feature>
<feature type="binding site" evidence="10 11 12 13 14">
    <location>
        <position position="675"/>
    </location>
    <ligand>
        <name>ADP</name>
        <dbReference type="ChEBI" id="CHEBI:456216"/>
    </ligand>
</feature>
<feature type="modified residue" description="S-6-FMN cysteine">
    <location>
        <position position="31"/>
    </location>
</feature>
<feature type="helix" evidence="16">
    <location>
        <begin position="5"/>
        <end position="11"/>
    </location>
</feature>
<feature type="strand" evidence="16">
    <location>
        <begin position="14"/>
        <end position="16"/>
    </location>
</feature>
<feature type="strand" evidence="16">
    <location>
        <begin position="19"/>
        <end position="27"/>
    </location>
</feature>
<feature type="turn" evidence="16">
    <location>
        <begin position="35"/>
        <end position="37"/>
    </location>
</feature>
<feature type="helix" evidence="16">
    <location>
        <begin position="39"/>
        <end position="51"/>
    </location>
</feature>
<feature type="strand" evidence="16">
    <location>
        <begin position="55"/>
        <end position="65"/>
    </location>
</feature>
<feature type="helix" evidence="16">
    <location>
        <begin position="81"/>
        <end position="95"/>
    </location>
</feature>
<feature type="turn" evidence="16">
    <location>
        <begin position="96"/>
        <end position="98"/>
    </location>
</feature>
<feature type="strand" evidence="16">
    <location>
        <begin position="100"/>
        <end position="106"/>
    </location>
</feature>
<feature type="helix" evidence="16">
    <location>
        <begin position="109"/>
        <end position="111"/>
    </location>
</feature>
<feature type="turn" evidence="16">
    <location>
        <begin position="115"/>
        <end position="117"/>
    </location>
</feature>
<feature type="strand" evidence="16">
    <location>
        <begin position="122"/>
        <end position="125"/>
    </location>
</feature>
<feature type="strand" evidence="16">
    <location>
        <begin position="130"/>
        <end position="132"/>
    </location>
</feature>
<feature type="helix" evidence="16">
    <location>
        <begin position="142"/>
        <end position="161"/>
    </location>
</feature>
<feature type="strand" evidence="16">
    <location>
        <begin position="165"/>
        <end position="171"/>
    </location>
</feature>
<feature type="helix" evidence="16">
    <location>
        <begin position="176"/>
        <end position="181"/>
    </location>
</feature>
<feature type="turn" evidence="16">
    <location>
        <begin position="183"/>
        <end position="185"/>
    </location>
</feature>
<feature type="strand" evidence="16">
    <location>
        <begin position="193"/>
        <end position="195"/>
    </location>
</feature>
<feature type="helix" evidence="16">
    <location>
        <begin position="196"/>
        <end position="199"/>
    </location>
</feature>
<feature type="helix" evidence="16">
    <location>
        <begin position="201"/>
        <end position="214"/>
    </location>
</feature>
<feature type="turn" evidence="16">
    <location>
        <begin position="215"/>
        <end position="217"/>
    </location>
</feature>
<feature type="strand" evidence="16">
    <location>
        <begin position="218"/>
        <end position="227"/>
    </location>
</feature>
<feature type="turn" evidence="16">
    <location>
        <begin position="237"/>
        <end position="239"/>
    </location>
</feature>
<feature type="helix" evidence="16">
    <location>
        <begin position="240"/>
        <end position="248"/>
    </location>
</feature>
<feature type="helix" evidence="16">
    <location>
        <begin position="249"/>
        <end position="251"/>
    </location>
</feature>
<feature type="strand" evidence="16">
    <location>
        <begin position="253"/>
        <end position="259"/>
    </location>
</feature>
<feature type="helix" evidence="16">
    <location>
        <begin position="265"/>
        <end position="267"/>
    </location>
</feature>
<feature type="turn" evidence="16">
    <location>
        <begin position="272"/>
        <end position="274"/>
    </location>
</feature>
<feature type="turn" evidence="16">
    <location>
        <begin position="277"/>
        <end position="280"/>
    </location>
</feature>
<feature type="helix" evidence="16">
    <location>
        <begin position="281"/>
        <end position="284"/>
    </location>
</feature>
<feature type="turn" evidence="16">
    <location>
        <begin position="285"/>
        <end position="290"/>
    </location>
</feature>
<feature type="strand" evidence="15">
    <location>
        <begin position="295"/>
        <end position="297"/>
    </location>
</feature>
<feature type="helix" evidence="16">
    <location>
        <begin position="304"/>
        <end position="312"/>
    </location>
</feature>
<feature type="strand" evidence="16">
    <location>
        <begin position="317"/>
        <end position="322"/>
    </location>
</feature>
<feature type="helix" evidence="16">
    <location>
        <begin position="323"/>
        <end position="327"/>
    </location>
</feature>
<feature type="helix" evidence="16">
    <location>
        <begin position="331"/>
        <end position="336"/>
    </location>
</feature>
<feature type="helix" evidence="16">
    <location>
        <begin position="340"/>
        <end position="342"/>
    </location>
</feature>
<feature type="helix" evidence="16">
    <location>
        <begin position="351"/>
        <end position="358"/>
    </location>
</feature>
<feature type="strand" evidence="16">
    <location>
        <begin position="359"/>
        <end position="361"/>
    </location>
</feature>
<feature type="turn" evidence="16">
    <location>
        <begin position="369"/>
        <end position="373"/>
    </location>
</feature>
<feature type="helix" evidence="16">
    <location>
        <begin position="374"/>
        <end position="377"/>
    </location>
</feature>
<feature type="strand" evidence="16">
    <location>
        <begin position="392"/>
        <end position="396"/>
    </location>
</feature>
<feature type="helix" evidence="16">
    <location>
        <begin position="400"/>
        <end position="411"/>
    </location>
</feature>
<feature type="strand" evidence="16">
    <location>
        <begin position="415"/>
        <end position="419"/>
    </location>
</feature>
<feature type="strand" evidence="16">
    <location>
        <begin position="421"/>
        <end position="424"/>
    </location>
</feature>
<feature type="turn" evidence="16">
    <location>
        <begin position="425"/>
        <end position="428"/>
    </location>
</feature>
<feature type="helix" evidence="16">
    <location>
        <begin position="429"/>
        <end position="432"/>
    </location>
</feature>
<feature type="helix" evidence="16">
    <location>
        <begin position="439"/>
        <end position="442"/>
    </location>
</feature>
<feature type="helix" evidence="16">
    <location>
        <begin position="443"/>
        <end position="458"/>
    </location>
</feature>
<feature type="strand" evidence="16">
    <location>
        <begin position="463"/>
        <end position="465"/>
    </location>
</feature>
<feature type="helix" evidence="16">
    <location>
        <begin position="473"/>
        <end position="477"/>
    </location>
</feature>
<feature type="strand" evidence="16">
    <location>
        <begin position="482"/>
        <end position="486"/>
    </location>
</feature>
<feature type="strand" evidence="16">
    <location>
        <begin position="490"/>
        <end position="492"/>
    </location>
</feature>
<feature type="turn" evidence="16">
    <location>
        <begin position="499"/>
        <end position="501"/>
    </location>
</feature>
<feature type="helix" evidence="16">
    <location>
        <begin position="518"/>
        <end position="523"/>
    </location>
</feature>
<feature type="strand" evidence="16">
    <location>
        <begin position="530"/>
        <end position="536"/>
    </location>
</feature>
<feature type="helix" evidence="16">
    <location>
        <begin position="542"/>
        <end position="552"/>
    </location>
</feature>
<feature type="strand" evidence="16">
    <location>
        <begin position="556"/>
        <end position="563"/>
    </location>
</feature>
<feature type="helix" evidence="16">
    <location>
        <begin position="567"/>
        <end position="571"/>
    </location>
</feature>
<feature type="helix" evidence="16">
    <location>
        <begin position="575"/>
        <end position="584"/>
    </location>
</feature>
<feature type="strand" evidence="16">
    <location>
        <begin position="588"/>
        <end position="590"/>
    </location>
</feature>
<feature type="strand" evidence="16">
    <location>
        <begin position="592"/>
        <end position="599"/>
    </location>
</feature>
<feature type="strand" evidence="16">
    <location>
        <begin position="602"/>
        <end position="607"/>
    </location>
</feature>
<feature type="strand" evidence="16">
    <location>
        <begin position="632"/>
        <end position="635"/>
    </location>
</feature>
<feature type="strand" evidence="16">
    <location>
        <begin position="637"/>
        <end position="643"/>
    </location>
</feature>
<feature type="strand" evidence="16">
    <location>
        <begin position="645"/>
        <end position="647"/>
    </location>
</feature>
<feature type="helix" evidence="16">
    <location>
        <begin position="650"/>
        <end position="657"/>
    </location>
</feature>
<feature type="helix" evidence="16">
    <location>
        <begin position="659"/>
        <end position="661"/>
    </location>
</feature>
<feature type="helix" evidence="16">
    <location>
        <begin position="663"/>
        <end position="665"/>
    </location>
</feature>
<feature type="strand" evidence="16">
    <location>
        <begin position="669"/>
        <end position="672"/>
    </location>
</feature>
<feature type="helix" evidence="16">
    <location>
        <begin position="674"/>
        <end position="676"/>
    </location>
</feature>
<feature type="helix" evidence="16">
    <location>
        <begin position="682"/>
        <end position="694"/>
    </location>
</feature>
<feature type="turn" evidence="16">
    <location>
        <begin position="695"/>
        <end position="697"/>
    </location>
</feature>